<proteinExistence type="evidence at protein level"/>
<feature type="chain" id="PRO_0000080628" description="Ubiquitin carboxyl-terminal hydrolase 8">
    <location>
        <begin position="1"/>
        <end position="1080"/>
    </location>
</feature>
<feature type="domain" description="MIT">
    <location>
        <begin position="33"/>
        <end position="116"/>
    </location>
</feature>
<feature type="domain" description="Rhodanese" evidence="3">
    <location>
        <begin position="195"/>
        <end position="313"/>
    </location>
</feature>
<feature type="domain" description="USP">
    <location>
        <begin position="739"/>
        <end position="1071"/>
    </location>
</feature>
<feature type="region of interest" description="Disordered" evidence="6">
    <location>
        <begin position="119"/>
        <end position="176"/>
    </location>
</feature>
<feature type="region of interest" description="Disordered" evidence="6">
    <location>
        <begin position="379"/>
        <end position="455"/>
    </location>
</feature>
<feature type="region of interest" description="Disordered" evidence="6">
    <location>
        <begin position="468"/>
        <end position="605"/>
    </location>
</feature>
<feature type="region of interest" description="Disordered" evidence="6">
    <location>
        <begin position="642"/>
        <end position="710"/>
    </location>
</feature>
<feature type="short sequence motif" description="SH3-binding">
    <location>
        <begin position="405"/>
        <end position="413"/>
    </location>
</feature>
<feature type="compositionally biased region" description="Basic and acidic residues" evidence="6">
    <location>
        <begin position="119"/>
        <end position="173"/>
    </location>
</feature>
<feature type="compositionally biased region" description="Low complexity" evidence="6">
    <location>
        <begin position="379"/>
        <end position="393"/>
    </location>
</feature>
<feature type="compositionally biased region" description="Basic and acidic residues" evidence="6">
    <location>
        <begin position="417"/>
        <end position="427"/>
    </location>
</feature>
<feature type="compositionally biased region" description="Basic and acidic residues" evidence="6">
    <location>
        <begin position="468"/>
        <end position="535"/>
    </location>
</feature>
<feature type="compositionally biased region" description="Basic and acidic residues" evidence="6">
    <location>
        <begin position="549"/>
        <end position="577"/>
    </location>
</feature>
<feature type="compositionally biased region" description="Basic and acidic residues" evidence="6">
    <location>
        <begin position="593"/>
        <end position="605"/>
    </location>
</feature>
<feature type="compositionally biased region" description="Polar residues" evidence="6">
    <location>
        <begin position="678"/>
        <end position="688"/>
    </location>
</feature>
<feature type="active site" description="Nucleophile">
    <location>
        <position position="748"/>
    </location>
</feature>
<feature type="active site" description="Proton acceptor" evidence="4 5">
    <location>
        <position position="1029"/>
    </location>
</feature>
<feature type="modified residue" description="Phosphoserine" evidence="2">
    <location>
        <position position="160"/>
    </location>
</feature>
<feature type="modified residue" description="Phosphoserine" evidence="2">
    <location>
        <position position="392"/>
    </location>
</feature>
<feature type="modified residue" description="Phosphoserine" evidence="2">
    <location>
        <position position="446"/>
    </location>
</feature>
<feature type="modified residue" description="Phosphothreonine" evidence="2">
    <location>
        <position position="569"/>
    </location>
</feature>
<feature type="modified residue" description="Phosphoserine" evidence="14 18">
    <location>
        <position position="680"/>
    </location>
</feature>
<feature type="modified residue" description="Phosphoserine" evidence="2">
    <location>
        <position position="681"/>
    </location>
</feature>
<feature type="modified residue" description="Phosphothreonine" evidence="16">
    <location>
        <position position="907"/>
    </location>
</feature>
<feature type="mutagenesis site" description="Abolishes interaction with the SH3 domain of STAM2." evidence="7">
    <original>P</original>
    <variation>A</variation>
    <location>
        <position position="405"/>
    </location>
</feature>
<feature type="mutagenesis site" description="Does not affect interaction with the SH3 domain of STAM2." evidence="7">
    <original>Q</original>
    <variation>A</variation>
    <location>
        <position position="406"/>
    </location>
</feature>
<feature type="mutagenesis site" description="Reduces interaction with the SH3 domain of STAM2." evidence="7">
    <original>V</original>
    <variation>A</variation>
    <location>
        <position position="407"/>
    </location>
</feature>
<feature type="mutagenesis site" description="Reduces interaction with the SH3 domain of STAM2." evidence="7">
    <original>D</original>
    <variation>A</variation>
    <location>
        <position position="408"/>
    </location>
</feature>
<feature type="mutagenesis site" description="Abolishes interaction with the SH3 domain of STAM2." evidence="7">
    <original>R</original>
    <variation>A</variation>
    <location>
        <position position="409"/>
    </location>
</feature>
<feature type="mutagenesis site" description="Does not affect interaction with the SH3 domain of STAM2." evidence="7">
    <original>T</original>
    <variation>A</variation>
    <location>
        <position position="410"/>
    </location>
</feature>
<feature type="mutagenesis site" description="Does not affect interaction with the SH3 domain of STAM2." evidence="7">
    <original>K</original>
    <variation>A</variation>
    <location>
        <position position="411"/>
    </location>
</feature>
<feature type="mutagenesis site" description="Abolishes interaction with the SH3 domain of STAM2." evidence="7">
    <original>K</original>
    <variation>A</variation>
    <location>
        <position position="412"/>
    </location>
</feature>
<feature type="mutagenesis site" description="Abolishes interaction with the SH3 domain of STAM2." evidence="7">
    <original>P</original>
    <variation>A</variation>
    <location>
        <position position="413"/>
    </location>
</feature>
<feature type="mutagenesis site" description="Abolishes the interaction with YWHAE and leads to accumulation in the nucleus." evidence="14 18">
    <original>S</original>
    <variation>A</variation>
    <location>
        <position position="680"/>
    </location>
</feature>
<feature type="mutagenesis site" description="Impairs deubiquitination of EPS15, RNF128 and RNF41." evidence="9 10 12 13">
    <original>C</original>
    <variation>A</variation>
    <location>
        <position position="748"/>
    </location>
</feature>
<feature type="mutagenesis site" description="Reduces stabilization activity on RNF41." evidence="16">
    <original>T</original>
    <variation>A</variation>
    <location>
        <position position="907"/>
    </location>
</feature>
<feature type="sequence conflict" description="In Ref. 2; AAD38869." evidence="20" ref="2">
    <original>Q</original>
    <variation>P</variation>
    <location>
        <position position="139"/>
    </location>
</feature>
<feature type="sequence conflict" description="In Ref. 1; BAB18534." evidence="20" ref="1">
    <original>K</original>
    <variation>R</variation>
    <location>
        <position position="151"/>
    </location>
</feature>
<feature type="sequence conflict" description="In Ref. 1; BAB18534." evidence="20" ref="1">
    <original>T</original>
    <variation>A</variation>
    <location>
        <position position="349"/>
    </location>
</feature>
<feature type="sequence conflict" description="In Ref. 1; BAB18534." evidence="20" ref="1">
    <original>E</original>
    <variation>G</variation>
    <location>
        <position position="370"/>
    </location>
</feature>
<feature type="sequence conflict" description="In Ref. 1; BAB18534." evidence="20" ref="1">
    <original>D</original>
    <variation>N</variation>
    <location>
        <position position="557"/>
    </location>
</feature>
<feature type="sequence conflict" description="In Ref. 1; BAB18534." evidence="20" ref="1">
    <original>P</original>
    <variation>L</variation>
    <location>
        <position position="576"/>
    </location>
</feature>
<feature type="sequence conflict" description="In Ref. 1; BAB18534." evidence="20" ref="1">
    <original>F</original>
    <variation>S</variation>
    <location>
        <position position="837"/>
    </location>
</feature>
<feature type="sequence conflict" description="In Ref. 1; BAB18534." evidence="20" ref="1">
    <original>DLQAAEHAW</original>
    <variation>EPAGGRARL</variation>
    <location>
        <begin position="865"/>
        <end position="873"/>
    </location>
</feature>
<feature type="sequence conflict" description="In Ref. 1; BAB18534." evidence="20" ref="1">
    <original>VA</original>
    <variation>RL</variation>
    <location>
        <begin position="885"/>
        <end position="886"/>
    </location>
</feature>
<feature type="sequence conflict" description="In Ref. 1; BAB18534." evidence="20" ref="1">
    <original>S</original>
    <variation>A</variation>
    <location>
        <position position="894"/>
    </location>
</feature>
<feature type="helix" evidence="22">
    <location>
        <begin position="704"/>
        <end position="706"/>
    </location>
</feature>
<keyword id="KW-0002">3D-structure</keyword>
<keyword id="KW-0131">Cell cycle</keyword>
<keyword id="KW-1003">Cell membrane</keyword>
<keyword id="KW-0963">Cytoplasm</keyword>
<keyword id="KW-0967">Endosome</keyword>
<keyword id="KW-0378">Hydrolase</keyword>
<keyword id="KW-0472">Membrane</keyword>
<keyword id="KW-0539">Nucleus</keyword>
<keyword id="KW-0597">Phosphoprotein</keyword>
<keyword id="KW-0645">Protease</keyword>
<keyword id="KW-1185">Reference proteome</keyword>
<keyword id="KW-0729">SH3-binding</keyword>
<keyword id="KW-0788">Thiol protease</keyword>
<keyword id="KW-0832">Ubl conjugation</keyword>
<keyword id="KW-0833">Ubl conjugation pathway</keyword>
<dbReference type="EC" id="3.4.19.12" evidence="12"/>
<dbReference type="EMBL" id="AB045709">
    <property type="protein sequence ID" value="BAB18534.1"/>
    <property type="molecule type" value="mRNA"/>
</dbReference>
<dbReference type="EMBL" id="AF057146">
    <property type="protein sequence ID" value="AAD38869.1"/>
    <property type="molecule type" value="mRNA"/>
</dbReference>
<dbReference type="EMBL" id="AK122195">
    <property type="protein sequence ID" value="BAC65477.1"/>
    <property type="status" value="ALT_INIT"/>
    <property type="molecule type" value="mRNA"/>
</dbReference>
<dbReference type="EMBL" id="AL732330">
    <property type="status" value="NOT_ANNOTATED_CDS"/>
    <property type="molecule type" value="Genomic_DNA"/>
</dbReference>
<dbReference type="EMBL" id="BC027052">
    <property type="protein sequence ID" value="AAH27052.1"/>
    <property type="molecule type" value="mRNA"/>
</dbReference>
<dbReference type="EMBL" id="BC050947">
    <property type="protein sequence ID" value="AAH50947.1"/>
    <property type="molecule type" value="mRNA"/>
</dbReference>
<dbReference type="EMBL" id="BC061465">
    <property type="protein sequence ID" value="AAH61465.1"/>
    <property type="molecule type" value="mRNA"/>
</dbReference>
<dbReference type="EMBL" id="BC066126">
    <property type="protein sequence ID" value="AAH66126.1"/>
    <property type="molecule type" value="mRNA"/>
</dbReference>
<dbReference type="CCDS" id="CCDS16687.1"/>
<dbReference type="RefSeq" id="NP_062703.2">
    <property type="nucleotide sequence ID" value="NM_019729.3"/>
</dbReference>
<dbReference type="PDB" id="1UJ0">
    <property type="method" value="X-ray"/>
    <property type="resolution" value="1.70 A"/>
    <property type="chains" value="B=699-709"/>
</dbReference>
<dbReference type="PDBsum" id="1UJ0"/>
<dbReference type="SMR" id="Q80U87"/>
<dbReference type="BioGRID" id="220000">
    <property type="interactions" value="24"/>
</dbReference>
<dbReference type="FunCoup" id="Q80U87">
    <property type="interactions" value="3216"/>
</dbReference>
<dbReference type="IntAct" id="Q80U87">
    <property type="interactions" value="7"/>
</dbReference>
<dbReference type="MINT" id="Q80U87"/>
<dbReference type="STRING" id="10090.ENSMUSP00000106046"/>
<dbReference type="MEROPS" id="C19.011"/>
<dbReference type="GlyGen" id="Q80U87">
    <property type="glycosylation" value="4 sites, 1 O-linked glycan (2 sites)"/>
</dbReference>
<dbReference type="iPTMnet" id="Q80U87"/>
<dbReference type="PhosphoSitePlus" id="Q80U87"/>
<dbReference type="jPOST" id="Q80U87"/>
<dbReference type="PaxDb" id="10090-ENSMUSP00000106046"/>
<dbReference type="ProteomicsDB" id="297795"/>
<dbReference type="Pumba" id="Q80U87"/>
<dbReference type="Antibodypedia" id="1385">
    <property type="antibodies" value="275 antibodies from 28 providers"/>
</dbReference>
<dbReference type="DNASU" id="84092"/>
<dbReference type="Ensembl" id="ENSMUST00000028841.14">
    <property type="protein sequence ID" value="ENSMUSP00000028841.8"/>
    <property type="gene ID" value="ENSMUSG00000027363.16"/>
</dbReference>
<dbReference type="GeneID" id="84092"/>
<dbReference type="KEGG" id="mmu:84092"/>
<dbReference type="UCSC" id="uc008meb.2">
    <property type="organism name" value="mouse"/>
</dbReference>
<dbReference type="AGR" id="MGI:1934029"/>
<dbReference type="CTD" id="9101"/>
<dbReference type="MGI" id="MGI:1934029">
    <property type="gene designation" value="Usp8"/>
</dbReference>
<dbReference type="VEuPathDB" id="HostDB:ENSMUSG00000027363"/>
<dbReference type="eggNOG" id="KOG1868">
    <property type="taxonomic scope" value="Eukaryota"/>
</dbReference>
<dbReference type="GeneTree" id="ENSGT00940000157542"/>
<dbReference type="InParanoid" id="Q80U87"/>
<dbReference type="OMA" id="YKYDDHE"/>
<dbReference type="OrthoDB" id="292964at2759"/>
<dbReference type="Reactome" id="R-MMU-1358803">
    <property type="pathway name" value="Downregulation of ERBB2:ERBB3 signaling"/>
</dbReference>
<dbReference type="Reactome" id="R-MMU-4641263">
    <property type="pathway name" value="Regulation of FZD by ubiquitination"/>
</dbReference>
<dbReference type="Reactome" id="R-MMU-5689880">
    <property type="pathway name" value="Ub-specific processing proteases"/>
</dbReference>
<dbReference type="Reactome" id="R-MMU-6807004">
    <property type="pathway name" value="Negative regulation of MET activity"/>
</dbReference>
<dbReference type="BioGRID-ORCS" id="84092">
    <property type="hits" value="25 hits in 77 CRISPR screens"/>
</dbReference>
<dbReference type="CD-CODE" id="01CA17F3">
    <property type="entry name" value="Centrosome"/>
</dbReference>
<dbReference type="ChiTaRS" id="Usp8">
    <property type="organism name" value="mouse"/>
</dbReference>
<dbReference type="EvolutionaryTrace" id="Q80U87"/>
<dbReference type="PRO" id="PR:Q80U87"/>
<dbReference type="Proteomes" id="UP000000589">
    <property type="component" value="Chromosome 2"/>
</dbReference>
<dbReference type="RNAct" id="Q80U87">
    <property type="molecule type" value="protein"/>
</dbReference>
<dbReference type="Bgee" id="ENSMUSG00000027363">
    <property type="expression patterns" value="Expressed in spermatid and 256 other cell types or tissues"/>
</dbReference>
<dbReference type="ExpressionAtlas" id="Q80U87">
    <property type="expression patterns" value="baseline and differential"/>
</dbReference>
<dbReference type="GO" id="GO:0002080">
    <property type="term" value="C:acrosomal membrane"/>
    <property type="evidence" value="ECO:0000314"/>
    <property type="project" value="MGI"/>
</dbReference>
<dbReference type="GO" id="GO:0005737">
    <property type="term" value="C:cytoplasm"/>
    <property type="evidence" value="ECO:0000266"/>
    <property type="project" value="MGI"/>
</dbReference>
<dbReference type="GO" id="GO:0005829">
    <property type="term" value="C:cytosol"/>
    <property type="evidence" value="ECO:0000314"/>
    <property type="project" value="UniProtKB"/>
</dbReference>
<dbReference type="GO" id="GO:0005769">
    <property type="term" value="C:early endosome"/>
    <property type="evidence" value="ECO:0007669"/>
    <property type="project" value="Ensembl"/>
</dbReference>
<dbReference type="GO" id="GO:0010008">
    <property type="term" value="C:endosome membrane"/>
    <property type="evidence" value="ECO:0000314"/>
    <property type="project" value="UniProtKB"/>
</dbReference>
<dbReference type="GO" id="GO:0098978">
    <property type="term" value="C:glutamatergic synapse"/>
    <property type="evidence" value="ECO:0007669"/>
    <property type="project" value="Ensembl"/>
</dbReference>
<dbReference type="GO" id="GO:0030496">
    <property type="term" value="C:midbody"/>
    <property type="evidence" value="ECO:0000314"/>
    <property type="project" value="MGI"/>
</dbReference>
<dbReference type="GO" id="GO:0005634">
    <property type="term" value="C:nucleus"/>
    <property type="evidence" value="ECO:0007669"/>
    <property type="project" value="UniProtKB-SubCell"/>
</dbReference>
<dbReference type="GO" id="GO:0005886">
    <property type="term" value="C:plasma membrane"/>
    <property type="evidence" value="ECO:0007669"/>
    <property type="project" value="UniProtKB-SubCell"/>
</dbReference>
<dbReference type="GO" id="GO:0014069">
    <property type="term" value="C:postsynaptic density"/>
    <property type="evidence" value="ECO:0007669"/>
    <property type="project" value="Ensembl"/>
</dbReference>
<dbReference type="GO" id="GO:0004843">
    <property type="term" value="F:cysteine-type deubiquitinase activity"/>
    <property type="evidence" value="ECO:0000314"/>
    <property type="project" value="UniProtKB"/>
</dbReference>
<dbReference type="GO" id="GO:1990380">
    <property type="term" value="F:K48-linked deubiquitinase activity"/>
    <property type="evidence" value="ECO:0007669"/>
    <property type="project" value="Ensembl"/>
</dbReference>
<dbReference type="GO" id="GO:0061578">
    <property type="term" value="F:K63-linked deubiquitinase activity"/>
    <property type="evidence" value="ECO:0007669"/>
    <property type="project" value="Ensembl"/>
</dbReference>
<dbReference type="GO" id="GO:0017124">
    <property type="term" value="F:SH3 domain binding"/>
    <property type="evidence" value="ECO:0007669"/>
    <property type="project" value="UniProtKB-KW"/>
</dbReference>
<dbReference type="GO" id="GO:0071549">
    <property type="term" value="P:cellular response to dexamethasone stimulus"/>
    <property type="evidence" value="ECO:0007669"/>
    <property type="project" value="Ensembl"/>
</dbReference>
<dbReference type="GO" id="GO:1990090">
    <property type="term" value="P:cellular response to nerve growth factor stimulus"/>
    <property type="evidence" value="ECO:0007669"/>
    <property type="project" value="Ensembl"/>
</dbReference>
<dbReference type="GO" id="GO:0007032">
    <property type="term" value="P:endosome organization"/>
    <property type="evidence" value="ECO:0000315"/>
    <property type="project" value="UniProtKB"/>
</dbReference>
<dbReference type="GO" id="GO:0000281">
    <property type="term" value="P:mitotic cytokinesis"/>
    <property type="evidence" value="ECO:0000266"/>
    <property type="project" value="MGI"/>
</dbReference>
<dbReference type="GO" id="GO:1905166">
    <property type="term" value="P:negative regulation of lysosomal protein catabolic process"/>
    <property type="evidence" value="ECO:0007669"/>
    <property type="project" value="Ensembl"/>
</dbReference>
<dbReference type="GO" id="GO:1905908">
    <property type="term" value="P:positive regulation of amyloid fibril formation"/>
    <property type="evidence" value="ECO:0007669"/>
    <property type="project" value="Ensembl"/>
</dbReference>
<dbReference type="GO" id="GO:0090263">
    <property type="term" value="P:positive regulation of canonical Wnt signaling pathway"/>
    <property type="evidence" value="ECO:0007669"/>
    <property type="project" value="Ensembl"/>
</dbReference>
<dbReference type="GO" id="GO:0016579">
    <property type="term" value="P:protein deubiquitination"/>
    <property type="evidence" value="ECO:0000314"/>
    <property type="project" value="UniProtKB"/>
</dbReference>
<dbReference type="GO" id="GO:0071108">
    <property type="term" value="P:protein K48-linked deubiquitination"/>
    <property type="evidence" value="ECO:0007669"/>
    <property type="project" value="Ensembl"/>
</dbReference>
<dbReference type="GO" id="GO:0070536">
    <property type="term" value="P:protein K63-linked deubiquitination"/>
    <property type="evidence" value="ECO:0007669"/>
    <property type="project" value="Ensembl"/>
</dbReference>
<dbReference type="GO" id="GO:0006508">
    <property type="term" value="P:proteolysis"/>
    <property type="evidence" value="ECO:0007669"/>
    <property type="project" value="UniProtKB-KW"/>
</dbReference>
<dbReference type="GO" id="GO:0007265">
    <property type="term" value="P:Ras protein signal transduction"/>
    <property type="evidence" value="ECO:0000353"/>
    <property type="project" value="MGI"/>
</dbReference>
<dbReference type="GO" id="GO:0099576">
    <property type="term" value="P:regulation of protein catabolic process at postsynapse, modulating synaptic transmission"/>
    <property type="evidence" value="ECO:0007669"/>
    <property type="project" value="Ensembl"/>
</dbReference>
<dbReference type="GO" id="GO:0032880">
    <property type="term" value="P:regulation of protein localization"/>
    <property type="evidence" value="ECO:0000250"/>
    <property type="project" value="UniProtKB"/>
</dbReference>
<dbReference type="GO" id="GO:0031647">
    <property type="term" value="P:regulation of protein stability"/>
    <property type="evidence" value="ECO:0000250"/>
    <property type="project" value="UniProtKB"/>
</dbReference>
<dbReference type="CDD" id="cd02674">
    <property type="entry name" value="Peptidase_C19R"/>
    <property type="match status" value="1"/>
</dbReference>
<dbReference type="FunFam" id="3.90.70.10:FF:000025">
    <property type="entry name" value="Putative ubiquitin carboxyl-terminal hydrolase 8"/>
    <property type="match status" value="1"/>
</dbReference>
<dbReference type="FunFam" id="1.20.58.80:FF:000011">
    <property type="entry name" value="Ubiquitin carboxyl-terminal hydrolase 8"/>
    <property type="match status" value="1"/>
</dbReference>
<dbReference type="FunFam" id="3.40.250.10:FF:000017">
    <property type="entry name" value="ubiquitin carboxyl-terminal hydrolase 8"/>
    <property type="match status" value="1"/>
</dbReference>
<dbReference type="Gene3D" id="3.90.70.10">
    <property type="entry name" value="Cysteine proteinases"/>
    <property type="match status" value="1"/>
</dbReference>
<dbReference type="Gene3D" id="1.20.58.80">
    <property type="entry name" value="Phosphotransferase system, lactose/cellobiose-type IIA subunit"/>
    <property type="match status" value="1"/>
</dbReference>
<dbReference type="Gene3D" id="3.40.250.10">
    <property type="entry name" value="Rhodanese-like domain"/>
    <property type="match status" value="1"/>
</dbReference>
<dbReference type="InterPro" id="IPR038765">
    <property type="entry name" value="Papain-like_cys_pep_sf"/>
</dbReference>
<dbReference type="InterPro" id="IPR001394">
    <property type="entry name" value="Peptidase_C19_UCH"/>
</dbReference>
<dbReference type="InterPro" id="IPR001763">
    <property type="entry name" value="Rhodanese-like_dom"/>
</dbReference>
<dbReference type="InterPro" id="IPR036873">
    <property type="entry name" value="Rhodanese-like_dom_sf"/>
</dbReference>
<dbReference type="InterPro" id="IPR050185">
    <property type="entry name" value="Ub_carboxyl-term_hydrolase"/>
</dbReference>
<dbReference type="InterPro" id="IPR015063">
    <property type="entry name" value="USP8_dimer"/>
</dbReference>
<dbReference type="InterPro" id="IPR018200">
    <property type="entry name" value="USP_CS"/>
</dbReference>
<dbReference type="InterPro" id="IPR028889">
    <property type="entry name" value="USP_dom"/>
</dbReference>
<dbReference type="InterPro" id="IPR048498">
    <property type="entry name" value="WW_USP8"/>
</dbReference>
<dbReference type="PANTHER" id="PTHR21646">
    <property type="entry name" value="UBIQUITIN CARBOXYL-TERMINAL HYDROLASE"/>
    <property type="match status" value="1"/>
</dbReference>
<dbReference type="PANTHER" id="PTHR21646:SF27">
    <property type="entry name" value="UBIQUITIN CARBOXYL-TERMINAL HYDROLASE 8"/>
    <property type="match status" value="1"/>
</dbReference>
<dbReference type="Pfam" id="PF00581">
    <property type="entry name" value="Rhodanese"/>
    <property type="match status" value="1"/>
</dbReference>
<dbReference type="Pfam" id="PF00443">
    <property type="entry name" value="UCH"/>
    <property type="match status" value="1"/>
</dbReference>
<dbReference type="Pfam" id="PF08969">
    <property type="entry name" value="USP8_dimer"/>
    <property type="match status" value="1"/>
</dbReference>
<dbReference type="Pfam" id="PF20625">
    <property type="entry name" value="WW_USP8"/>
    <property type="match status" value="1"/>
</dbReference>
<dbReference type="SMART" id="SM00450">
    <property type="entry name" value="RHOD"/>
    <property type="match status" value="1"/>
</dbReference>
<dbReference type="SUPFAM" id="SSF54001">
    <property type="entry name" value="Cysteine proteinases"/>
    <property type="match status" value="1"/>
</dbReference>
<dbReference type="SUPFAM" id="SSF52821">
    <property type="entry name" value="Rhodanese/Cell cycle control phosphatase"/>
    <property type="match status" value="1"/>
</dbReference>
<dbReference type="SUPFAM" id="SSF140856">
    <property type="entry name" value="USP8 N-terminal domain-like"/>
    <property type="match status" value="1"/>
</dbReference>
<dbReference type="PROSITE" id="PS50206">
    <property type="entry name" value="RHODANESE_3"/>
    <property type="match status" value="1"/>
</dbReference>
<dbReference type="PROSITE" id="PS00972">
    <property type="entry name" value="USP_1"/>
    <property type="match status" value="1"/>
</dbReference>
<dbReference type="PROSITE" id="PS00973">
    <property type="entry name" value="USP_2"/>
    <property type="match status" value="1"/>
</dbReference>
<dbReference type="PROSITE" id="PS50235">
    <property type="entry name" value="USP_3"/>
    <property type="match status" value="1"/>
</dbReference>
<organism>
    <name type="scientific">Mus musculus</name>
    <name type="common">Mouse</name>
    <dbReference type="NCBI Taxonomy" id="10090"/>
    <lineage>
        <taxon>Eukaryota</taxon>
        <taxon>Metazoa</taxon>
        <taxon>Chordata</taxon>
        <taxon>Craniata</taxon>
        <taxon>Vertebrata</taxon>
        <taxon>Euteleostomi</taxon>
        <taxon>Mammalia</taxon>
        <taxon>Eutheria</taxon>
        <taxon>Euarchontoglires</taxon>
        <taxon>Glires</taxon>
        <taxon>Rodentia</taxon>
        <taxon>Myomorpha</taxon>
        <taxon>Muroidea</taxon>
        <taxon>Muridae</taxon>
        <taxon>Murinae</taxon>
        <taxon>Mus</taxon>
        <taxon>Mus</taxon>
    </lineage>
</organism>
<comment type="function">
    <text evidence="1 2 8 10 12 13 15 16 17 18 19">Hydrolase that can remove conjugated ubiquitin from proteins and therefore plays an important regulatory role at the level of protein turnover by preventing degradation. Converts both 'Lys-48' an 'Lys-63'-linked ubiquitin chains. Catalytic activity is enhanced in the M phase. Involved in cell proliferation. Required to enter into S phase in response to serum stimulation. May regulate T-cell anergy mediated by RNF128 via the formation of a complex containing RNF128 and OTUB1. Probably regulates the stability of STAM2 and RASGRF1. Regulates endosomal ubiquitin dynamics, cargo sorting, membrane traffic at early endosomes, and maintenance of ESCRT-0 stability. The level of protein ubiquitination on endosomes is essential for maintaining the morphology of the organelle. Deubiquitinates EPS15 and controls tyrosine kinase stability. Removes conjugated ubiquitin from EGFR thus regulating EGFR degradation and downstream MAPK signaling. Involved in acrosome biogenesis through interaction with the spermatid ESCRT-0 complex and microtubules. Deubiquitinates BIRC6/bruce and KIF23/MKLP1 (By similarity). Deubiquitinates BACE1 which inhibits BACE1 lysosomal degradation and modulates BACE-mediated APP cleavage and amyloid-beta formation (By similarity).</text>
</comment>
<comment type="catalytic activity">
    <reaction evidence="12">
        <text>Thiol-dependent hydrolysis of ester, thioester, amide, peptide and isopeptide bonds formed by the C-terminal Gly of ubiquitin (a 76-residue protein attached to proteins as an intracellular targeting signal).</text>
        <dbReference type="EC" id="3.4.19.12"/>
    </reaction>
</comment>
<comment type="subunit">
    <text evidence="1 7 8 9 10 11 13 14 15 18">Forms a ternary complex with RNF128 and OTUB1. Interacts (via C-terminal UCH catalytic domain) with OTUB1 isoform 1. Interacts with STAM2 (via SH3 domain). Interacts with DNAJB3, EGFR, EPS15, RASGRF1, RNF41, YWHAE, YWHAG and YWHAZ. Interacts with NBR1, RASGRF1, RNF41 and IST1 (By similarity). Associates with the ESCRT-0 complex and with microtubules. Interacts with BIRC6/bruce and KIF23/MKLP1.</text>
</comment>
<comment type="subcellular location">
    <subcellularLocation>
        <location evidence="18">Cytoplasm</location>
    </subcellularLocation>
    <subcellularLocation>
        <location evidence="14">Nucleus</location>
    </subcellularLocation>
    <subcellularLocation>
        <location evidence="12">Endosome membrane</location>
        <topology evidence="20">Peripheral membrane protein</topology>
    </subcellularLocation>
    <subcellularLocation>
        <location evidence="2">Cell membrane</location>
        <topology evidence="20">Peripheral membrane protein</topology>
    </subcellularLocation>
</comment>
<comment type="tissue specificity">
    <text evidence="8 11">Highly expressed in testis. Expressed at intermediate level in brain.</text>
</comment>
<comment type="domain">
    <text evidence="1">The MIT domain is required for endosomal localization, CHMP1B-binding, maintenance of ESCRT-0 stability and EGFR degradation.</text>
</comment>
<comment type="domain">
    <text>The rhodanese domain is sufficient for RNF41-binding.</text>
</comment>
<comment type="PTM">
    <text evidence="14 15 16 18">Phosphorylation of Ser-680 is essential for interaction with YWHAE and for cytosol localization. Undergoes dephosphorylation at Ser-680 in the M phase. Tyrosine-phosphorylated in its N-terminal half in an EGFR-dependent manner.</text>
</comment>
<comment type="PTM">
    <text evidence="12">Ubiquitinated. Inactive form is mostly monoubiquitinated, but polyubiquitination happens too. Ubiquitination is increased in EGF-stimulated cells. Ubiquitination of active form is undetectable, suggesting a possibility that USP8 deubiquitinates itself, thereby regulating its own function.</text>
</comment>
<comment type="similarity">
    <text evidence="20">Belongs to the peptidase C19 family.</text>
</comment>
<comment type="sequence caution" evidence="20">
    <conflict type="erroneous initiation">
        <sequence resource="EMBL-CDS" id="BAC65477"/>
    </conflict>
    <text>Extended N-terminus.</text>
</comment>
<protein>
    <recommendedName>
        <fullName evidence="20">Ubiquitin carboxyl-terminal hydrolase 8</fullName>
        <ecNumber evidence="12">3.4.19.12</ecNumber>
    </recommendedName>
    <alternativeName>
        <fullName>Deubiquitinating enzyme 8</fullName>
    </alternativeName>
    <alternativeName>
        <fullName>Ubiquitin isopeptidase Y</fullName>
        <shortName>mUBPy</shortName>
    </alternativeName>
    <alternativeName>
        <fullName>Ubiquitin thioesterase 8</fullName>
    </alternativeName>
    <alternativeName>
        <fullName>Ubiquitin-specific-processing protease 8</fullName>
    </alternativeName>
</protein>
<accession>Q80U87</accession>
<accession>A2AI53</accession>
<accession>Q80YP2</accession>
<accession>Q8R0D3</accession>
<accession>Q9EQU1</accession>
<accession>Q9WVP5</accession>
<evidence type="ECO:0000250" key="1"/>
<evidence type="ECO:0000250" key="2">
    <source>
        <dbReference type="UniProtKB" id="P40818"/>
    </source>
</evidence>
<evidence type="ECO:0000255" key="3">
    <source>
        <dbReference type="PROSITE-ProRule" id="PRU00173"/>
    </source>
</evidence>
<evidence type="ECO:0000255" key="4">
    <source>
        <dbReference type="PROSITE-ProRule" id="PRU10092"/>
    </source>
</evidence>
<evidence type="ECO:0000255" key="5">
    <source>
        <dbReference type="PROSITE-ProRule" id="PRU10093"/>
    </source>
</evidence>
<evidence type="ECO:0000256" key="6">
    <source>
        <dbReference type="SAM" id="MobiDB-lite"/>
    </source>
</evidence>
<evidence type="ECO:0000269" key="7">
    <source>
    </source>
</evidence>
<evidence type="ECO:0000269" key="8">
    <source>
    </source>
</evidence>
<evidence type="ECO:0000269" key="9">
    <source>
    </source>
</evidence>
<evidence type="ECO:0000269" key="10">
    <source>
    </source>
</evidence>
<evidence type="ECO:0000269" key="11">
    <source>
    </source>
</evidence>
<evidence type="ECO:0000269" key="12">
    <source>
    </source>
</evidence>
<evidence type="ECO:0000269" key="13">
    <source>
    </source>
</evidence>
<evidence type="ECO:0000269" key="14">
    <source>
    </source>
</evidence>
<evidence type="ECO:0000269" key="15">
    <source>
    </source>
</evidence>
<evidence type="ECO:0000269" key="16">
    <source>
    </source>
</evidence>
<evidence type="ECO:0000269" key="17">
    <source>
    </source>
</evidence>
<evidence type="ECO:0000269" key="18">
    <source>
    </source>
</evidence>
<evidence type="ECO:0000269" key="19">
    <source>
    </source>
</evidence>
<evidence type="ECO:0000305" key="20"/>
<evidence type="ECO:0000312" key="21">
    <source>
        <dbReference type="MGI" id="MGI:1934029"/>
    </source>
</evidence>
<evidence type="ECO:0007829" key="22">
    <source>
        <dbReference type="PDB" id="1UJ0"/>
    </source>
</evidence>
<gene>
    <name evidence="21" type="primary">Usp8</name>
    <name type="synonym">Kiaa0055</name>
    <name type="synonym">Ubpy</name>
</gene>
<sequence>MPAVASVPKELYLSSSLKDLNKKTEVKPEKTSTKNYIHSAQKIFKTAEECRLDRDEERAYVLYMKYVAVYNLIKKRPDFKQQQDYYLSILGPANIKKAIEEAERLSESLKLRYEEAEVRKQLEEKDRREEEQLQQQKRQEMGREDSGAAAKRSVENLLDSKTKTQRINGEKSEGAAAAERGAITAKELYTMMMDKNTSLIIMDARKIQDYQHSCILDSLSVPEEAISPGVTASWIEANLSDDSKDTWKKRGSVDYVVLLDWFSSAKDLLLGTTLRSLKDALFKWESKTVLRHEPLVLEGGYENWLLCYPQFTTNAKVTPPPRSRAEEVSVSLDFTYPSLEEPVPSKLPTQMPPPPIETNEKALLVTDQDEKLRLSTQPALAGPGAAPRAEASPIIQPAPATKSVPQVDRTKKPSVKLPEDHRIKSENTDQSGRVLSDRSTKPVFPSPTTMLTDEEKARIHQETALLMEKNKQEKELWDKQQKEQKEKLRREEQERKAGKTQDADERDSTENQHKAKDGQEKKDSKQTKTEDRELSADGAQEATGTQRQSKSEHEASDAKVPVEGKRCPTSEAQKRPADVSPASVSGELNAGKAQREPLTRARSEEMGRIVPGLPLGWAKFLDPITGTFRYYHSPTNTVHMYPPEMAPSSAPPSTPPTHKVKPQVPAERDREPSKLKRSYSSPDITQALQEEEKRRPAVTPMVNRENKPPCYPKAEISRLSASQIRNLNPVFGGSGPALTGLRNLGNTCYMNSILQCLCNAPHLADYFNRNCYQDDINRSNLLGHKGEVAEEFGIIMKALWTGQYRYISPKDFKVTIGKINDQFAGSSQQDSQELLLFLMDGLHEDLNKADNRKRHKEENNEHLDDLQAAEHAWQKHKQLNESIIVALFQGQFKSTVQCLTCRRRSRTFEAFMYLSLPLASTSKCTLQDCLRLFSKEEKLTDNNRFYCSHCRARRDSLKKIEIWKLPPVLLVHLKRFSYDGRWKQKLQTSVDFPLENLDLSQYVIGPKNSLKKYNLFSVSNHYGGLDGGHYTAYCKNAARQRWFKFDDHEVSDISVSSVRSSAAYILFYTSLGPRITDVAT</sequence>
<name>UBP8_MOUSE</name>
<reference key="1">
    <citation type="journal article" date="2000" name="J. Biol. Chem.">
        <title>A deubiquitinating enzyme UBPY interacts with the Src homology 3 domain of Hrs-binding protein via a novel binding motif PX(V/I)(D/N)RXXKP.</title>
        <authorList>
            <person name="Kato M."/>
            <person name="Miyazawa K."/>
            <person name="Kitamura N."/>
        </authorList>
    </citation>
    <scope>NUCLEOTIDE SEQUENCE [MRNA]</scope>
    <scope>SH3-BINDING</scope>
    <scope>INTERACTION WITH STAM2</scope>
    <scope>MUTAGENESIS OF PRO-405; GLN-406; VAL-407; ASP-408; ARG-409; THR-410; LYS-411; LYS-412 AND PRO-413</scope>
</reference>
<reference key="2">
    <citation type="journal article" date="2001" name="J. Biol. Chem.">
        <title>Cloning and characterization of mouse UBPy, a deubiquitinating enzyme that interacts with the ras guanine nucleotide exchange factor CDC25(Mm)/Ras-GRF1.</title>
        <authorList>
            <person name="Gnesutta N."/>
            <person name="Ceriani M."/>
            <person name="Innocenti M."/>
            <person name="Mauri I."/>
            <person name="Zippel R."/>
            <person name="Sturani E."/>
            <person name="Borgonovo B."/>
            <person name="Berruti G."/>
            <person name="Martegani E."/>
        </authorList>
    </citation>
    <scope>NUCLEOTIDE SEQUENCE [MRNA]</scope>
    <scope>FUNCTION</scope>
    <scope>TISSUE SPECIFICITY</scope>
    <scope>INTERACTION WITH RASGRF1</scope>
    <source>
        <tissue>Embryo</tissue>
    </source>
</reference>
<reference key="3">
    <citation type="journal article" date="2003" name="DNA Res.">
        <title>Prediction of the coding sequences of mouse homologues of KIAA gene: II. The complete nucleotide sequences of 400 mouse KIAA-homologous cDNAs identified by screening of terminal sequences of cDNA clones randomly sampled from size-fractionated libraries.</title>
        <authorList>
            <person name="Okazaki N."/>
            <person name="Kikuno R."/>
            <person name="Ohara R."/>
            <person name="Inamoto S."/>
            <person name="Aizawa H."/>
            <person name="Yuasa S."/>
            <person name="Nakajima D."/>
            <person name="Nagase T."/>
            <person name="Ohara O."/>
            <person name="Koga H."/>
        </authorList>
    </citation>
    <scope>NUCLEOTIDE SEQUENCE [LARGE SCALE MRNA]</scope>
    <source>
        <tissue>Brain</tissue>
    </source>
</reference>
<reference key="4">
    <citation type="journal article" date="2009" name="PLoS Biol.">
        <title>Lineage-specific biology revealed by a finished genome assembly of the mouse.</title>
        <authorList>
            <person name="Church D.M."/>
            <person name="Goodstadt L."/>
            <person name="Hillier L.W."/>
            <person name="Zody M.C."/>
            <person name="Goldstein S."/>
            <person name="She X."/>
            <person name="Bult C.J."/>
            <person name="Agarwala R."/>
            <person name="Cherry J.L."/>
            <person name="DiCuccio M."/>
            <person name="Hlavina W."/>
            <person name="Kapustin Y."/>
            <person name="Meric P."/>
            <person name="Maglott D."/>
            <person name="Birtle Z."/>
            <person name="Marques A.C."/>
            <person name="Graves T."/>
            <person name="Zhou S."/>
            <person name="Teague B."/>
            <person name="Potamousis K."/>
            <person name="Churas C."/>
            <person name="Place M."/>
            <person name="Herschleb J."/>
            <person name="Runnheim R."/>
            <person name="Forrest D."/>
            <person name="Amos-Landgraf J."/>
            <person name="Schwartz D.C."/>
            <person name="Cheng Z."/>
            <person name="Lindblad-Toh K."/>
            <person name="Eichler E.E."/>
            <person name="Ponting C.P."/>
        </authorList>
    </citation>
    <scope>NUCLEOTIDE SEQUENCE [LARGE SCALE GENOMIC DNA]</scope>
    <source>
        <strain>C57BL/6J</strain>
    </source>
</reference>
<reference key="5">
    <citation type="journal article" date="2004" name="Genome Res.">
        <title>The status, quality, and expansion of the NIH full-length cDNA project: the Mammalian Gene Collection (MGC).</title>
        <authorList>
            <consortium name="The MGC Project Team"/>
        </authorList>
    </citation>
    <scope>NUCLEOTIDE SEQUENCE [LARGE SCALE MRNA]</scope>
    <source>
        <strain>C57BL/6J</strain>
        <tissue>Brain</tissue>
        <tissue>Kidney</tissue>
    </source>
</reference>
<reference key="6">
    <citation type="journal article" date="2004" name="Mol. Cell. Biol.">
        <title>Stabilization of the E3 ubiquitin ligase Nrdp1 by the deubiquitinating enzyme USP8.</title>
        <authorList>
            <person name="Wu X."/>
            <person name="Yen L."/>
            <person name="Irwin L."/>
            <person name="Sweeney C."/>
            <person name="Carraway K.L. III"/>
        </authorList>
    </citation>
    <scope>IDENTIFICATION BY MASS SPECTROMETRY</scope>
    <scope>INTERACTION WITH RNF41</scope>
    <scope>FUNCTION</scope>
    <scope>MUTAGENESIS OF CYS-748</scope>
</reference>
<reference key="7">
    <citation type="journal article" date="2004" name="Mol. Cell. Proteomics">
        <title>Phosphoproteomic analysis of the developing mouse brain.</title>
        <authorList>
            <person name="Ballif B.A."/>
            <person name="Villen J."/>
            <person name="Beausoleil S.A."/>
            <person name="Schwartz D."/>
            <person name="Gygi S.P."/>
        </authorList>
    </citation>
    <scope>IDENTIFICATION BY MASS SPECTROMETRY [LARGE SCALE ANALYSIS]</scope>
    <source>
        <tissue>Embryonic brain</tissue>
    </source>
</reference>
<reference key="8">
    <citation type="journal article" date="2004" name="Nat. Immunol.">
        <title>Two isoforms of otubain 1 regulate T cell anergy via GRAIL.</title>
        <authorList>
            <person name="Soares L."/>
            <person name="Seroogy C."/>
            <person name="Skrenta H."/>
            <person name="Anandasabapathy N."/>
            <person name="Lovelace P."/>
            <person name="Chung C.D."/>
            <person name="Engleman E."/>
            <person name="Fathman C.G."/>
        </authorList>
    </citation>
    <scope>INTERACTION WITH OTUB1 AND RNF128</scope>
    <scope>MUTAGENESIS OF CYS-748</scope>
</reference>
<reference key="9">
    <citation type="journal article" date="2005" name="Biol. Reprod.">
        <title>The deubiquitinating enzyme mUBPy interacts with the sperm-specific molecular chaperone MSJ-1: the relation with the proteasome, acrosome, and centrosome in mouse male germ cells.</title>
        <authorList>
            <person name="Berruti G."/>
            <person name="Martegani E."/>
        </authorList>
    </citation>
    <scope>TISSUE SPECIFICITY</scope>
    <scope>INTERACTION WITH DNAJB3</scope>
</reference>
<reference key="10">
    <citation type="journal article" date="2005" name="Mol. Biol. Cell">
        <title>Regulation of epidermal growth factor receptor down-regulation by UBPY-mediated deubiquitination at endosomes.</title>
        <authorList>
            <person name="Mizuno E."/>
            <person name="Iura T."/>
            <person name="Mukai A."/>
            <person name="Yoshimori T."/>
            <person name="Kitamura N."/>
            <person name="Komada M."/>
        </authorList>
    </citation>
    <scope>FUNCTION</scope>
    <scope>CATALYTIC ACTIVITY</scope>
    <scope>SUBCELLULAR LOCATION</scope>
    <scope>UBIQUITINATION</scope>
    <scope>MUTAGENESIS OF CYS-748</scope>
</reference>
<reference key="11">
    <citation type="journal article" date="2006" name="Traffic">
        <title>A deubiquitinating enzyme UBPY regulates the level of protein ubiquitination on endosomes.</title>
        <authorList>
            <person name="Mizuno E."/>
            <person name="Kobayashi K."/>
            <person name="Yamamoto A."/>
            <person name="Kitamura N."/>
            <person name="Komada M."/>
        </authorList>
    </citation>
    <scope>FUNCTION</scope>
    <scope>MUTAGENESIS OF CYS-748</scope>
    <scope>INTERACTION WITH ESP15</scope>
</reference>
<reference key="12">
    <citation type="journal article" date="2007" name="J. Biol. Chem.">
        <title>UBPY-mediated epidermal growth factor receptor (EGFR) de-ubiquitination promotes EGFR degradation.</title>
        <authorList>
            <person name="Alwan H.A."/>
            <person name="van Leeuwen J.E."/>
        </authorList>
    </citation>
    <scope>PHOSPHORYLATION</scope>
    <scope>INTERACTION WITH EGFR</scope>
    <scope>FUNCTION</scope>
</reference>
<reference key="13">
    <citation type="journal article" date="2006" name="J. Proteome Res.">
        <title>Identification of 14-3-3epsilon substrates from embryonic murine brain.</title>
        <authorList>
            <person name="Ballif B.A."/>
            <person name="Cao Z."/>
            <person name="Schwartz D."/>
            <person name="Carraway K.L. III"/>
            <person name="Gygi S.P."/>
        </authorList>
    </citation>
    <scope>PHOSPHORYLATION AT SER-680</scope>
    <scope>INTERACTION WITH YWHAE</scope>
    <scope>MUTAGENESIS OF SER-680</scope>
    <scope>SUBCELLULAR LOCATION</scope>
</reference>
<reference key="14">
    <citation type="journal article" date="2007" name="Exp. Cell Res.">
        <title>14-3-3-dependent inhibition of the deubiquitinating activity of UBPY and its cancellation in the M phase.</title>
        <authorList>
            <person name="Mizuno E."/>
            <person name="Kitamura N."/>
            <person name="Komada M."/>
        </authorList>
    </citation>
    <scope>FUNCTION</scope>
    <scope>PHOSPHORYLATION AT SER-680</scope>
    <scope>INTERACTION WITH YWHAE; YWHAG AND YWHAZ</scope>
    <scope>MUTAGENESIS OF SER-680</scope>
    <scope>SUBCELLULAR LOCATION</scope>
</reference>
<reference key="15">
    <citation type="journal article" date="2007" name="Mol. Cell. Biol.">
        <title>Neuregulin-induced ErbB3 downregulation is mediated by a protein stability cascade involving the E3 ubiquitin ligase Nrdp1.</title>
        <authorList>
            <person name="Cao Z."/>
            <person name="Wu X."/>
            <person name="Yen L."/>
            <person name="Sweeney C."/>
            <person name="Carraway K.L. III"/>
        </authorList>
    </citation>
    <scope>FUNCTION</scope>
    <scope>PHOSPHORYLATION AT THR-907</scope>
    <scope>MUTAGENESIS OF THR-907</scope>
</reference>
<reference key="16">
    <citation type="journal article" date="2007" name="Mol. Cell. Biol.">
        <title>Essential role of ubiquitin-specific protease 8 for receptor tyrosine kinase stability and endocytic trafficking in vivo.</title>
        <authorList>
            <person name="Niendorf S."/>
            <person name="Oksche A."/>
            <person name="Kisser A."/>
            <person name="Lohler J."/>
            <person name="Prinz M."/>
            <person name="Schorle H."/>
            <person name="Feller S."/>
            <person name="Lewitzky M."/>
            <person name="Horak I."/>
            <person name="Knobeloch K.P."/>
        </authorList>
    </citation>
    <scope>FUNCTION</scope>
</reference>
<reference key="17">
    <citation type="journal article" date="2009" name="Immunity">
        <title>The phagosomal proteome in interferon-gamma-activated macrophages.</title>
        <authorList>
            <person name="Trost M."/>
            <person name="English L."/>
            <person name="Lemieux S."/>
            <person name="Courcelles M."/>
            <person name="Desjardins M."/>
            <person name="Thibault P."/>
        </authorList>
    </citation>
    <scope>IDENTIFICATION BY MASS SPECTROMETRY [LARGE SCALE ANALYSIS]</scope>
</reference>
<reference key="18">
    <citation type="journal article" date="2010" name="Biol. Reprod.">
        <title>USP8, a regulator of endosomal sorting, is involved in mouse acrosome biogenesis through interaction with the spermatid ESCRT-0 complex and microtubules.</title>
        <authorList>
            <person name="Berruti G."/>
            <person name="Ripolone M."/>
            <person name="Ceriani M."/>
        </authorList>
    </citation>
    <scope>FUNCTION</scope>
    <scope>ASSOCIATION WITH THE ESCRT-0 COMPLEX</scope>
    <scope>MICROTUBULE-BINDING</scope>
</reference>
<reference key="19">
    <citation type="journal article" date="2010" name="Cell">
        <title>A tissue-specific atlas of mouse protein phosphorylation and expression.</title>
        <authorList>
            <person name="Huttlin E.L."/>
            <person name="Jedrychowski M.P."/>
            <person name="Elias J.E."/>
            <person name="Goswami T."/>
            <person name="Rad R."/>
            <person name="Beausoleil S.A."/>
            <person name="Villen J."/>
            <person name="Haas W."/>
            <person name="Sowa M.E."/>
            <person name="Gygi S.P."/>
        </authorList>
    </citation>
    <scope>IDENTIFICATION BY MASS SPECTROMETRY [LARGE SCALE ANALYSIS]</scope>
    <source>
        <tissue>Brain</tissue>
        <tissue>Brown adipose tissue</tissue>
        <tissue>Heart</tissue>
        <tissue>Kidney</tissue>
        <tissue>Liver</tissue>
        <tissue>Lung</tissue>
        <tissue>Pancreas</tissue>
        <tissue>Spleen</tissue>
        <tissue>Testis</tissue>
    </source>
</reference>